<evidence type="ECO:0000255" key="1">
    <source>
        <dbReference type="HAMAP-Rule" id="MF_00473"/>
    </source>
</evidence>
<evidence type="ECO:0000305" key="2"/>
<organism>
    <name type="scientific">Aromatoleum aromaticum (strain DSM 19018 / LMG 30748 / EbN1)</name>
    <name type="common">Azoarcus sp. (strain EbN1)</name>
    <dbReference type="NCBI Taxonomy" id="76114"/>
    <lineage>
        <taxon>Bacteria</taxon>
        <taxon>Pseudomonadati</taxon>
        <taxon>Pseudomonadota</taxon>
        <taxon>Betaproteobacteria</taxon>
        <taxon>Rhodocyclales</taxon>
        <taxon>Rhodocyclaceae</taxon>
        <taxon>Aromatoleum</taxon>
    </lineage>
</organism>
<reference key="1">
    <citation type="journal article" date="2005" name="Arch. Microbiol.">
        <title>The genome sequence of an anaerobic aromatic-degrading denitrifying bacterium, strain EbN1.</title>
        <authorList>
            <person name="Rabus R."/>
            <person name="Kube M."/>
            <person name="Heider J."/>
            <person name="Beck A."/>
            <person name="Heitmann K."/>
            <person name="Widdel F."/>
            <person name="Reinhardt R."/>
        </authorList>
    </citation>
    <scope>NUCLEOTIDE SEQUENCE [LARGE SCALE GENOMIC DNA]</scope>
    <source>
        <strain>DSM 19018 / LMG 30748 / EbN1</strain>
    </source>
</reference>
<comment type="function">
    <text evidence="1">Catalyzes the reversible isomerization of glucose-6-phosphate to fructose-6-phosphate.</text>
</comment>
<comment type="catalytic activity">
    <reaction evidence="1">
        <text>alpha-D-glucose 6-phosphate = beta-D-fructose 6-phosphate</text>
        <dbReference type="Rhea" id="RHEA:11816"/>
        <dbReference type="ChEBI" id="CHEBI:57634"/>
        <dbReference type="ChEBI" id="CHEBI:58225"/>
        <dbReference type="EC" id="5.3.1.9"/>
    </reaction>
</comment>
<comment type="pathway">
    <text evidence="1">Carbohydrate biosynthesis; gluconeogenesis.</text>
</comment>
<comment type="pathway">
    <text evidence="1">Carbohydrate degradation; glycolysis; D-glyceraldehyde 3-phosphate and glycerone phosphate from D-glucose: step 2/4.</text>
</comment>
<comment type="subcellular location">
    <subcellularLocation>
        <location evidence="1">Cytoplasm</location>
    </subcellularLocation>
</comment>
<comment type="similarity">
    <text evidence="1">Belongs to the GPI family.</text>
</comment>
<comment type="sequence caution" evidence="2">
    <conflict type="erroneous initiation">
        <sequence resource="EMBL-CDS" id="CAI09080"/>
    </conflict>
</comment>
<name>G6PI_AROAE</name>
<keyword id="KW-0963">Cytoplasm</keyword>
<keyword id="KW-0312">Gluconeogenesis</keyword>
<keyword id="KW-0324">Glycolysis</keyword>
<keyword id="KW-0413">Isomerase</keyword>
<keyword id="KW-1185">Reference proteome</keyword>
<protein>
    <recommendedName>
        <fullName evidence="1">Glucose-6-phosphate isomerase</fullName>
        <shortName evidence="1">GPI</shortName>
        <ecNumber evidence="1">5.3.1.9</ecNumber>
    </recommendedName>
    <alternativeName>
        <fullName evidence="1">Phosphoglucose isomerase</fullName>
        <shortName evidence="1">PGI</shortName>
    </alternativeName>
    <alternativeName>
        <fullName evidence="1">Phosphohexose isomerase</fullName>
        <shortName evidence="1">PHI</shortName>
    </alternativeName>
</protein>
<feature type="chain" id="PRO_0000180583" description="Glucose-6-phosphate isomerase">
    <location>
        <begin position="1"/>
        <end position="545"/>
    </location>
</feature>
<feature type="active site" description="Proton donor" evidence="1">
    <location>
        <position position="353"/>
    </location>
</feature>
<feature type="active site" evidence="1">
    <location>
        <position position="384"/>
    </location>
</feature>
<feature type="active site" evidence="1">
    <location>
        <position position="510"/>
    </location>
</feature>
<proteinExistence type="inferred from homology"/>
<dbReference type="EC" id="5.3.1.9" evidence="1"/>
<dbReference type="EMBL" id="CR555306">
    <property type="protein sequence ID" value="CAI09080.1"/>
    <property type="status" value="ALT_INIT"/>
    <property type="molecule type" value="Genomic_DNA"/>
</dbReference>
<dbReference type="SMR" id="Q5P0T4"/>
<dbReference type="STRING" id="76114.ebA5208"/>
<dbReference type="KEGG" id="eba:ebA5208"/>
<dbReference type="eggNOG" id="COG0166">
    <property type="taxonomic scope" value="Bacteria"/>
</dbReference>
<dbReference type="HOGENOM" id="CLU_017947_3_1_4"/>
<dbReference type="UniPathway" id="UPA00109">
    <property type="reaction ID" value="UER00181"/>
</dbReference>
<dbReference type="UniPathway" id="UPA00138"/>
<dbReference type="Proteomes" id="UP000006552">
    <property type="component" value="Chromosome"/>
</dbReference>
<dbReference type="GO" id="GO:0005829">
    <property type="term" value="C:cytosol"/>
    <property type="evidence" value="ECO:0007669"/>
    <property type="project" value="TreeGrafter"/>
</dbReference>
<dbReference type="GO" id="GO:0097367">
    <property type="term" value="F:carbohydrate derivative binding"/>
    <property type="evidence" value="ECO:0007669"/>
    <property type="project" value="InterPro"/>
</dbReference>
<dbReference type="GO" id="GO:0004347">
    <property type="term" value="F:glucose-6-phosphate isomerase activity"/>
    <property type="evidence" value="ECO:0007669"/>
    <property type="project" value="UniProtKB-UniRule"/>
</dbReference>
<dbReference type="GO" id="GO:0048029">
    <property type="term" value="F:monosaccharide binding"/>
    <property type="evidence" value="ECO:0007669"/>
    <property type="project" value="TreeGrafter"/>
</dbReference>
<dbReference type="GO" id="GO:0006094">
    <property type="term" value="P:gluconeogenesis"/>
    <property type="evidence" value="ECO:0007669"/>
    <property type="project" value="UniProtKB-UniRule"/>
</dbReference>
<dbReference type="GO" id="GO:0051156">
    <property type="term" value="P:glucose 6-phosphate metabolic process"/>
    <property type="evidence" value="ECO:0007669"/>
    <property type="project" value="TreeGrafter"/>
</dbReference>
<dbReference type="GO" id="GO:0006096">
    <property type="term" value="P:glycolytic process"/>
    <property type="evidence" value="ECO:0007669"/>
    <property type="project" value="UniProtKB-UniRule"/>
</dbReference>
<dbReference type="CDD" id="cd05015">
    <property type="entry name" value="SIS_PGI_1"/>
    <property type="match status" value="1"/>
</dbReference>
<dbReference type="CDD" id="cd05016">
    <property type="entry name" value="SIS_PGI_2"/>
    <property type="match status" value="1"/>
</dbReference>
<dbReference type="Gene3D" id="1.10.1390.10">
    <property type="match status" value="1"/>
</dbReference>
<dbReference type="Gene3D" id="3.40.50.10490">
    <property type="entry name" value="Glucose-6-phosphate isomerase like protein, domain 1"/>
    <property type="match status" value="2"/>
</dbReference>
<dbReference type="HAMAP" id="MF_00473">
    <property type="entry name" value="G6P_isomerase"/>
    <property type="match status" value="1"/>
</dbReference>
<dbReference type="InterPro" id="IPR001672">
    <property type="entry name" value="G6P_Isomerase"/>
</dbReference>
<dbReference type="InterPro" id="IPR023096">
    <property type="entry name" value="G6P_Isomerase_C"/>
</dbReference>
<dbReference type="InterPro" id="IPR018189">
    <property type="entry name" value="Phosphoglucose_isomerase_CS"/>
</dbReference>
<dbReference type="InterPro" id="IPR046348">
    <property type="entry name" value="SIS_dom_sf"/>
</dbReference>
<dbReference type="InterPro" id="IPR035476">
    <property type="entry name" value="SIS_PGI_1"/>
</dbReference>
<dbReference type="InterPro" id="IPR035482">
    <property type="entry name" value="SIS_PGI_2"/>
</dbReference>
<dbReference type="NCBIfam" id="NF001211">
    <property type="entry name" value="PRK00179.1"/>
    <property type="match status" value="1"/>
</dbReference>
<dbReference type="PANTHER" id="PTHR11469">
    <property type="entry name" value="GLUCOSE-6-PHOSPHATE ISOMERASE"/>
    <property type="match status" value="1"/>
</dbReference>
<dbReference type="PANTHER" id="PTHR11469:SF1">
    <property type="entry name" value="GLUCOSE-6-PHOSPHATE ISOMERASE"/>
    <property type="match status" value="1"/>
</dbReference>
<dbReference type="Pfam" id="PF00342">
    <property type="entry name" value="PGI"/>
    <property type="match status" value="1"/>
</dbReference>
<dbReference type="PRINTS" id="PR00662">
    <property type="entry name" value="G6PISOMERASE"/>
</dbReference>
<dbReference type="SUPFAM" id="SSF53697">
    <property type="entry name" value="SIS domain"/>
    <property type="match status" value="1"/>
</dbReference>
<dbReference type="PROSITE" id="PS00765">
    <property type="entry name" value="P_GLUCOSE_ISOMERASE_1"/>
    <property type="match status" value="1"/>
</dbReference>
<dbReference type="PROSITE" id="PS00174">
    <property type="entry name" value="P_GLUCOSE_ISOMERASE_2"/>
    <property type="match status" value="1"/>
</dbReference>
<dbReference type="PROSITE" id="PS51463">
    <property type="entry name" value="P_GLUCOSE_ISOMERASE_3"/>
    <property type="match status" value="1"/>
</dbReference>
<gene>
    <name evidence="1" type="primary">pgi</name>
    <name type="ordered locus">AZOSEA29550</name>
    <name type="ORF">ebA5208</name>
</gene>
<sequence>MTEPFTPPHRLSAWSTLENHAARLRTMRIAELFEHDAARFATLSFGHRGLLLDLSKQSIDAPALAALVDLAGQARLPDGIEALFAGEHLNFTEDRAVLHMALRGACAAPLEDAATLAQSQQRMRAFTVALRSGTMTGATGKPIRLVVNLGIGGSDLGPRMAAQALVPTGLRATPEVRFVANIDRRELDEALADADPASTLFVVSSKSFATAETLANAQAARAWLQAGLGAGCDPALHFTAVSNATDAAAAFGIPAERVFPLPEWVGGRYSVWSTIGLPLMIAIGASEFDAFLAGARAMDEHFRTAPPGENLPVLMGLAGLWNTDFLGIESLALLPYAHGLRSFAAWLQQLEMESNGKRCLRDGSGSVIHTSPIVWGGVGTVGQHAFHQLFYQGTRRVALDFIVPVAAADDVSQRSLVENAFAQSAALMSGRDLDTALASLRAKGLAESEAAVLAPHLVCPGNQPSTTVLLPALDAFSLGQLMALYEHKVFVQGWIWGINSFDQYGVELGKEMARSLSAGSGENHDASTAGLMAAAEAMRRTPDRS</sequence>
<accession>Q5P0T4</accession>